<feature type="chain" id="PRO_0000057407" description="tRNA pseudouridine synthase A">
    <location>
        <begin position="1"/>
        <end position="271"/>
    </location>
</feature>
<feature type="active site" description="Nucleophile" evidence="1">
    <location>
        <position position="51"/>
    </location>
</feature>
<feature type="binding site" evidence="1">
    <location>
        <position position="109"/>
    </location>
    <ligand>
        <name>substrate</name>
    </ligand>
</feature>
<organism>
    <name type="scientific">Methylococcus capsulatus (strain ATCC 33009 / NCIMB 11132 / Bath)</name>
    <dbReference type="NCBI Taxonomy" id="243233"/>
    <lineage>
        <taxon>Bacteria</taxon>
        <taxon>Pseudomonadati</taxon>
        <taxon>Pseudomonadota</taxon>
        <taxon>Gammaproteobacteria</taxon>
        <taxon>Methylococcales</taxon>
        <taxon>Methylococcaceae</taxon>
        <taxon>Methylococcus</taxon>
    </lineage>
</organism>
<name>TRUA_METCA</name>
<evidence type="ECO:0000255" key="1">
    <source>
        <dbReference type="HAMAP-Rule" id="MF_00171"/>
    </source>
</evidence>
<proteinExistence type="inferred from homology"/>
<reference key="1">
    <citation type="journal article" date="2004" name="PLoS Biol.">
        <title>Genomic insights into methanotrophy: the complete genome sequence of Methylococcus capsulatus (Bath).</title>
        <authorList>
            <person name="Ward N.L."/>
            <person name="Larsen O."/>
            <person name="Sakwa J."/>
            <person name="Bruseth L."/>
            <person name="Khouri H.M."/>
            <person name="Durkin A.S."/>
            <person name="Dimitrov G."/>
            <person name="Jiang L."/>
            <person name="Scanlan D."/>
            <person name="Kang K.H."/>
            <person name="Lewis M.R."/>
            <person name="Nelson K.E."/>
            <person name="Methe B.A."/>
            <person name="Wu M."/>
            <person name="Heidelberg J.F."/>
            <person name="Paulsen I.T."/>
            <person name="Fouts D.E."/>
            <person name="Ravel J."/>
            <person name="Tettelin H."/>
            <person name="Ren Q."/>
            <person name="Read T.D."/>
            <person name="DeBoy R.T."/>
            <person name="Seshadri R."/>
            <person name="Salzberg S.L."/>
            <person name="Jensen H.B."/>
            <person name="Birkeland N.K."/>
            <person name="Nelson W.C."/>
            <person name="Dodson R.J."/>
            <person name="Grindhaug S.H."/>
            <person name="Holt I.E."/>
            <person name="Eidhammer I."/>
            <person name="Jonasen I."/>
            <person name="Vanaken S."/>
            <person name="Utterback T.R."/>
            <person name="Feldblyum T.V."/>
            <person name="Fraser C.M."/>
            <person name="Lillehaug J.R."/>
            <person name="Eisen J.A."/>
        </authorList>
    </citation>
    <scope>NUCLEOTIDE SEQUENCE [LARGE SCALE GENOMIC DNA]</scope>
    <source>
        <strain>ATCC 33009 / NCIMB 11132 / Bath</strain>
    </source>
</reference>
<protein>
    <recommendedName>
        <fullName evidence="1">tRNA pseudouridine synthase A</fullName>
        <ecNumber evidence="1">5.4.99.12</ecNumber>
    </recommendedName>
    <alternativeName>
        <fullName evidence="1">tRNA pseudouridine(38-40) synthase</fullName>
    </alternativeName>
    <alternativeName>
        <fullName evidence="1">tRNA pseudouridylate synthase I</fullName>
    </alternativeName>
    <alternativeName>
        <fullName evidence="1">tRNA-uridine isomerase I</fullName>
    </alternativeName>
</protein>
<comment type="function">
    <text evidence="1">Formation of pseudouridine at positions 38, 39 and 40 in the anticodon stem and loop of transfer RNAs.</text>
</comment>
<comment type="catalytic activity">
    <reaction evidence="1">
        <text>uridine(38/39/40) in tRNA = pseudouridine(38/39/40) in tRNA</text>
        <dbReference type="Rhea" id="RHEA:22376"/>
        <dbReference type="Rhea" id="RHEA-COMP:10085"/>
        <dbReference type="Rhea" id="RHEA-COMP:10087"/>
        <dbReference type="ChEBI" id="CHEBI:65314"/>
        <dbReference type="ChEBI" id="CHEBI:65315"/>
        <dbReference type="EC" id="5.4.99.12"/>
    </reaction>
</comment>
<comment type="subunit">
    <text evidence="1">Homodimer.</text>
</comment>
<comment type="similarity">
    <text evidence="1">Belongs to the tRNA pseudouridine synthase TruA family.</text>
</comment>
<sequence length="271" mass="30735">MRIALGIEYDGSGFAGWQWQNGKRTIQAEVERALSRVADAPVRVTCAGRTDAGVHAIEQVAHFDTESRRSERSWLLGANTALPEDVRILWVRETEPHFHARLSAIARYYRYEILNRPMRSALRPRQFTWCHAPLDVERMREGAAYLVGEHDFSSFRAQQCQSRSPFRRVHFLHVRREGERVIMEIAANAFVHHMVRNIAGVLMAVGAGKRDPAWVGELLAMRDRAKGGVTAPPDGLYLGGVCYPEEFGLARDAVFEHLPADARRYQPDDES</sequence>
<dbReference type="EC" id="5.4.99.12" evidence="1"/>
<dbReference type="EMBL" id="AE017282">
    <property type="protein sequence ID" value="AAU91368.1"/>
    <property type="molecule type" value="Genomic_DNA"/>
</dbReference>
<dbReference type="RefSeq" id="WP_010961720.1">
    <property type="nucleotide sequence ID" value="NC_002977.6"/>
</dbReference>
<dbReference type="SMR" id="Q604P1"/>
<dbReference type="STRING" id="243233.MCA2497"/>
<dbReference type="GeneID" id="88224695"/>
<dbReference type="KEGG" id="mca:MCA2497"/>
<dbReference type="eggNOG" id="COG0101">
    <property type="taxonomic scope" value="Bacteria"/>
</dbReference>
<dbReference type="HOGENOM" id="CLU_014673_0_2_6"/>
<dbReference type="Proteomes" id="UP000006821">
    <property type="component" value="Chromosome"/>
</dbReference>
<dbReference type="GO" id="GO:0003723">
    <property type="term" value="F:RNA binding"/>
    <property type="evidence" value="ECO:0007669"/>
    <property type="project" value="InterPro"/>
</dbReference>
<dbReference type="GO" id="GO:0160147">
    <property type="term" value="F:tRNA pseudouridine(38-40) synthase activity"/>
    <property type="evidence" value="ECO:0007669"/>
    <property type="project" value="UniProtKB-EC"/>
</dbReference>
<dbReference type="GO" id="GO:0031119">
    <property type="term" value="P:tRNA pseudouridine synthesis"/>
    <property type="evidence" value="ECO:0007669"/>
    <property type="project" value="UniProtKB-UniRule"/>
</dbReference>
<dbReference type="CDD" id="cd02570">
    <property type="entry name" value="PseudoU_synth_EcTruA"/>
    <property type="match status" value="1"/>
</dbReference>
<dbReference type="FunFam" id="3.30.70.580:FF:000001">
    <property type="entry name" value="tRNA pseudouridine synthase A"/>
    <property type="match status" value="1"/>
</dbReference>
<dbReference type="Gene3D" id="3.30.70.660">
    <property type="entry name" value="Pseudouridine synthase I, catalytic domain, C-terminal subdomain"/>
    <property type="match status" value="1"/>
</dbReference>
<dbReference type="Gene3D" id="3.30.70.580">
    <property type="entry name" value="Pseudouridine synthase I, catalytic domain, N-terminal subdomain"/>
    <property type="match status" value="1"/>
</dbReference>
<dbReference type="HAMAP" id="MF_00171">
    <property type="entry name" value="TruA"/>
    <property type="match status" value="1"/>
</dbReference>
<dbReference type="InterPro" id="IPR020103">
    <property type="entry name" value="PsdUridine_synth_cat_dom_sf"/>
</dbReference>
<dbReference type="InterPro" id="IPR001406">
    <property type="entry name" value="PsdUridine_synth_TruA"/>
</dbReference>
<dbReference type="InterPro" id="IPR020097">
    <property type="entry name" value="PsdUridine_synth_TruA_a/b_dom"/>
</dbReference>
<dbReference type="InterPro" id="IPR020095">
    <property type="entry name" value="PsdUridine_synth_TruA_C"/>
</dbReference>
<dbReference type="InterPro" id="IPR020094">
    <property type="entry name" value="TruA/RsuA/RluB/E/F_N"/>
</dbReference>
<dbReference type="NCBIfam" id="TIGR00071">
    <property type="entry name" value="hisT_truA"/>
    <property type="match status" value="1"/>
</dbReference>
<dbReference type="PANTHER" id="PTHR11142">
    <property type="entry name" value="PSEUDOURIDYLATE SYNTHASE"/>
    <property type="match status" value="1"/>
</dbReference>
<dbReference type="PANTHER" id="PTHR11142:SF0">
    <property type="entry name" value="TRNA PSEUDOURIDINE SYNTHASE-LIKE 1"/>
    <property type="match status" value="1"/>
</dbReference>
<dbReference type="Pfam" id="PF01416">
    <property type="entry name" value="PseudoU_synth_1"/>
    <property type="match status" value="2"/>
</dbReference>
<dbReference type="PIRSF" id="PIRSF001430">
    <property type="entry name" value="tRNA_psdUrid_synth"/>
    <property type="match status" value="1"/>
</dbReference>
<dbReference type="SUPFAM" id="SSF55120">
    <property type="entry name" value="Pseudouridine synthase"/>
    <property type="match status" value="1"/>
</dbReference>
<keyword id="KW-0413">Isomerase</keyword>
<keyword id="KW-1185">Reference proteome</keyword>
<keyword id="KW-0819">tRNA processing</keyword>
<gene>
    <name evidence="1" type="primary">truA</name>
    <name type="ordered locus">MCA2497</name>
</gene>
<accession>Q604P1</accession>